<dbReference type="EC" id="5.4.3.8" evidence="1"/>
<dbReference type="EMBL" id="CP000570">
    <property type="protein sequence ID" value="ABN84156.1"/>
    <property type="status" value="ALT_INIT"/>
    <property type="molecule type" value="Genomic_DNA"/>
</dbReference>
<dbReference type="SMR" id="A3NCF3"/>
<dbReference type="KEGG" id="bpd:BURPS668_3011"/>
<dbReference type="HOGENOM" id="CLU_016922_1_5_4"/>
<dbReference type="UniPathway" id="UPA00251">
    <property type="reaction ID" value="UER00317"/>
</dbReference>
<dbReference type="GO" id="GO:0005737">
    <property type="term" value="C:cytoplasm"/>
    <property type="evidence" value="ECO:0007669"/>
    <property type="project" value="UniProtKB-SubCell"/>
</dbReference>
<dbReference type="GO" id="GO:0042286">
    <property type="term" value="F:glutamate-1-semialdehyde 2,1-aminomutase activity"/>
    <property type="evidence" value="ECO:0007669"/>
    <property type="project" value="UniProtKB-UniRule"/>
</dbReference>
<dbReference type="GO" id="GO:0030170">
    <property type="term" value="F:pyridoxal phosphate binding"/>
    <property type="evidence" value="ECO:0007669"/>
    <property type="project" value="InterPro"/>
</dbReference>
<dbReference type="GO" id="GO:0008483">
    <property type="term" value="F:transaminase activity"/>
    <property type="evidence" value="ECO:0007669"/>
    <property type="project" value="InterPro"/>
</dbReference>
<dbReference type="GO" id="GO:0006782">
    <property type="term" value="P:protoporphyrinogen IX biosynthetic process"/>
    <property type="evidence" value="ECO:0007669"/>
    <property type="project" value="UniProtKB-UniRule"/>
</dbReference>
<dbReference type="CDD" id="cd00610">
    <property type="entry name" value="OAT_like"/>
    <property type="match status" value="1"/>
</dbReference>
<dbReference type="FunFam" id="3.40.640.10:FF:000021">
    <property type="entry name" value="Glutamate-1-semialdehyde 2,1-aminomutase"/>
    <property type="match status" value="1"/>
</dbReference>
<dbReference type="Gene3D" id="3.90.1150.10">
    <property type="entry name" value="Aspartate Aminotransferase, domain 1"/>
    <property type="match status" value="1"/>
</dbReference>
<dbReference type="Gene3D" id="3.40.640.10">
    <property type="entry name" value="Type I PLP-dependent aspartate aminotransferase-like (Major domain)"/>
    <property type="match status" value="1"/>
</dbReference>
<dbReference type="HAMAP" id="MF_00375">
    <property type="entry name" value="HemL_aminotrans_3"/>
    <property type="match status" value="1"/>
</dbReference>
<dbReference type="InterPro" id="IPR004639">
    <property type="entry name" value="4pyrrol_synth_GluAld_NH2Trfase"/>
</dbReference>
<dbReference type="InterPro" id="IPR005814">
    <property type="entry name" value="Aminotrans_3"/>
</dbReference>
<dbReference type="InterPro" id="IPR049704">
    <property type="entry name" value="Aminotrans_3_PPA_site"/>
</dbReference>
<dbReference type="InterPro" id="IPR015424">
    <property type="entry name" value="PyrdxlP-dep_Trfase"/>
</dbReference>
<dbReference type="InterPro" id="IPR015421">
    <property type="entry name" value="PyrdxlP-dep_Trfase_major"/>
</dbReference>
<dbReference type="InterPro" id="IPR015422">
    <property type="entry name" value="PyrdxlP-dep_Trfase_small"/>
</dbReference>
<dbReference type="NCBIfam" id="TIGR00713">
    <property type="entry name" value="hemL"/>
    <property type="match status" value="1"/>
</dbReference>
<dbReference type="NCBIfam" id="NF000818">
    <property type="entry name" value="PRK00062.1"/>
    <property type="match status" value="1"/>
</dbReference>
<dbReference type="PANTHER" id="PTHR43713">
    <property type="entry name" value="GLUTAMATE-1-SEMIALDEHYDE 2,1-AMINOMUTASE"/>
    <property type="match status" value="1"/>
</dbReference>
<dbReference type="PANTHER" id="PTHR43713:SF3">
    <property type="entry name" value="GLUTAMATE-1-SEMIALDEHYDE 2,1-AMINOMUTASE 1, CHLOROPLASTIC-RELATED"/>
    <property type="match status" value="1"/>
</dbReference>
<dbReference type="Pfam" id="PF00202">
    <property type="entry name" value="Aminotran_3"/>
    <property type="match status" value="1"/>
</dbReference>
<dbReference type="SUPFAM" id="SSF53383">
    <property type="entry name" value="PLP-dependent transferases"/>
    <property type="match status" value="1"/>
</dbReference>
<dbReference type="PROSITE" id="PS00600">
    <property type="entry name" value="AA_TRANSFER_CLASS_3"/>
    <property type="match status" value="1"/>
</dbReference>
<feature type="chain" id="PRO_0000382288" description="Glutamate-1-semialdehyde 2,1-aminomutase">
    <location>
        <begin position="1"/>
        <end position="427"/>
    </location>
</feature>
<feature type="modified residue" description="N6-(pyridoxal phosphate)lysine" evidence="1">
    <location>
        <position position="265"/>
    </location>
</feature>
<proteinExistence type="inferred from homology"/>
<name>GSA_BURP6</name>
<organism>
    <name type="scientific">Burkholderia pseudomallei (strain 668)</name>
    <dbReference type="NCBI Taxonomy" id="320373"/>
    <lineage>
        <taxon>Bacteria</taxon>
        <taxon>Pseudomonadati</taxon>
        <taxon>Pseudomonadota</taxon>
        <taxon>Betaproteobacteria</taxon>
        <taxon>Burkholderiales</taxon>
        <taxon>Burkholderiaceae</taxon>
        <taxon>Burkholderia</taxon>
        <taxon>pseudomallei group</taxon>
    </lineage>
</organism>
<protein>
    <recommendedName>
        <fullName evidence="1">Glutamate-1-semialdehyde 2,1-aminomutase</fullName>
        <shortName evidence="1">GSA</shortName>
        <ecNumber evidence="1">5.4.3.8</ecNumber>
    </recommendedName>
    <alternativeName>
        <fullName evidence="1">Glutamate-1-semialdehyde aminotransferase</fullName>
        <shortName evidence="1">GSA-AT</shortName>
    </alternativeName>
</protein>
<evidence type="ECO:0000255" key="1">
    <source>
        <dbReference type="HAMAP-Rule" id="MF_00375"/>
    </source>
</evidence>
<evidence type="ECO:0000305" key="2"/>
<keyword id="KW-0963">Cytoplasm</keyword>
<keyword id="KW-0413">Isomerase</keyword>
<keyword id="KW-0627">Porphyrin biosynthesis</keyword>
<keyword id="KW-0663">Pyridoxal phosphate</keyword>
<comment type="catalytic activity">
    <reaction evidence="1">
        <text>(S)-4-amino-5-oxopentanoate = 5-aminolevulinate</text>
        <dbReference type="Rhea" id="RHEA:14265"/>
        <dbReference type="ChEBI" id="CHEBI:57501"/>
        <dbReference type="ChEBI" id="CHEBI:356416"/>
        <dbReference type="EC" id="5.4.3.8"/>
    </reaction>
</comment>
<comment type="cofactor">
    <cofactor evidence="1">
        <name>pyridoxal 5'-phosphate</name>
        <dbReference type="ChEBI" id="CHEBI:597326"/>
    </cofactor>
</comment>
<comment type="pathway">
    <text evidence="1">Porphyrin-containing compound metabolism; protoporphyrin-IX biosynthesis; 5-aminolevulinate from L-glutamyl-tRNA(Glu): step 2/2.</text>
</comment>
<comment type="subunit">
    <text evidence="1">Homodimer.</text>
</comment>
<comment type="subcellular location">
    <subcellularLocation>
        <location evidence="1">Cytoplasm</location>
    </subcellularLocation>
</comment>
<comment type="similarity">
    <text evidence="1">Belongs to the class-III pyridoxal-phosphate-dependent aminotransferase family. HemL subfamily.</text>
</comment>
<comment type="sequence caution" evidence="2">
    <conflict type="erroneous initiation">
        <sequence resource="EMBL-CDS" id="ABN84156"/>
    </conflict>
</comment>
<sequence>MSNNQTLFERAQRTIPGGVNSPVRAFRSVGGTPRFVARAQGAYFWDADGKRYIDYIGSWGPMIVGHVHPDVLAAVQHVLADGFSFGAPTEAEIEIAEEICKLVPSIEQVRMVSSGTEATMSALRLARGFTGRSRIVKFEGCYHGHADSLLVKAGSGLLTFGNPTSAGVPADVAKHTTVLEYNNVAALEEAFAAFGGEIAAVIVEPVAGNMNLVRGTPEFLNALRALTAKHGAVLIFDEVMCGFRVALGGAQQHYGITPDLTCLGKVIGGGMPAAAFGGRGDIMSHLAPLGGVYQAGTLSGNPVAVAAGLATLRLIQAPGFHDALADKTRRLADSLAAEARAAGVPFSADAIGGMFGLYFTEQVPASFADVTKSDIERFNRFFHLMLDAGVYFAPSAYEAGFVSSAHDDATLDATLDAARRAFAALRA</sequence>
<accession>A3NCF3</accession>
<reference key="1">
    <citation type="journal article" date="2010" name="Genome Biol. Evol.">
        <title>Continuing evolution of Burkholderia mallei through genome reduction and large-scale rearrangements.</title>
        <authorList>
            <person name="Losada L."/>
            <person name="Ronning C.M."/>
            <person name="DeShazer D."/>
            <person name="Woods D."/>
            <person name="Fedorova N."/>
            <person name="Kim H.S."/>
            <person name="Shabalina S.A."/>
            <person name="Pearson T.R."/>
            <person name="Brinkac L."/>
            <person name="Tan P."/>
            <person name="Nandi T."/>
            <person name="Crabtree J."/>
            <person name="Badger J."/>
            <person name="Beckstrom-Sternberg S."/>
            <person name="Saqib M."/>
            <person name="Schutzer S.E."/>
            <person name="Keim P."/>
            <person name="Nierman W.C."/>
        </authorList>
    </citation>
    <scope>NUCLEOTIDE SEQUENCE [LARGE SCALE GENOMIC DNA]</scope>
    <source>
        <strain>668</strain>
    </source>
</reference>
<gene>
    <name evidence="1" type="primary">hemL</name>
    <name type="ordered locus">BURPS668_3011</name>
</gene>